<name>PME_BRANA</name>
<sequence>MAVGKIVISVASMLLVVGVAIGVVTFVNKGGGAGGDKTLNSHQKAVESLCASATDKGSCAKTLDPVKSDDPSKLIKAFMLATKDAVTKSTNFTASTEEGMGKNINATSKAVLDYCKRVLMYALEDLETIVEEMGEDLQQSGSKMDQLKQWLTGVFNYQTDCIDDIEESELRKVMGEGIAHSKILSSNAIDIFHALTTAMSQMNVKVDDMKKGNLGETPAPDRDLLEDLDQKGLPKWHSDKDRKLMAQAGRPGAPADEGIGEGGGGGGKIKPTHVVAKDGSGQFKTISEAVKACPEKNPGRCIIYIKAGVYKEQVTIPKKVNNVFMFGDGATQTIITFDRSVGLSPGTTTSLSGTVQVESEGFMAKWIGFQNTAGPLGHQAVAFRVNGDRAVIFNCRFDGYQDTLYVNNGRQFYRNIVVSGTVDFIFGKSATVIQNSLILCRKGSPGQTNHVTADGNEKGKAVKIGIVLHNCRIMADKELEADRLTVKSYLGRPWKPFATTAVIGTEIGDLIQPTGWNEWQGEKFHLTATYVEFNNRGPGANTAARVPWAKMAKSAAEVERFTVANWLTPANWIQEANVPVQLGL</sequence>
<accession>P41510</accession>
<organism>
    <name type="scientific">Brassica napus</name>
    <name type="common">Rape</name>
    <dbReference type="NCBI Taxonomy" id="3708"/>
    <lineage>
        <taxon>Eukaryota</taxon>
        <taxon>Viridiplantae</taxon>
        <taxon>Streptophyta</taxon>
        <taxon>Embryophyta</taxon>
        <taxon>Tracheophyta</taxon>
        <taxon>Spermatophyta</taxon>
        <taxon>Magnoliopsida</taxon>
        <taxon>eudicotyledons</taxon>
        <taxon>Gunneridae</taxon>
        <taxon>Pentapetalae</taxon>
        <taxon>rosids</taxon>
        <taxon>malvids</taxon>
        <taxon>Brassicales</taxon>
        <taxon>Brassicaceae</taxon>
        <taxon>Brassiceae</taxon>
        <taxon>Brassica</taxon>
    </lineage>
</organism>
<proteinExistence type="evidence at transcript level"/>
<dbReference type="EC" id="3.1.1.11"/>
<dbReference type="EMBL" id="X56195">
    <property type="protein sequence ID" value="CAA39658.1"/>
    <property type="molecule type" value="Genomic_DNA"/>
</dbReference>
<dbReference type="PIR" id="S14952">
    <property type="entry name" value="S14952"/>
</dbReference>
<dbReference type="SMR" id="P41510"/>
<dbReference type="GlyCosmos" id="P41510">
    <property type="glycosylation" value="2 sites, No reported glycans"/>
</dbReference>
<dbReference type="UniPathway" id="UPA00545">
    <property type="reaction ID" value="UER00823"/>
</dbReference>
<dbReference type="GO" id="GO:0005576">
    <property type="term" value="C:extracellular region"/>
    <property type="evidence" value="ECO:0007669"/>
    <property type="project" value="UniProtKB-KW"/>
</dbReference>
<dbReference type="GO" id="GO:0004857">
    <property type="term" value="F:enzyme inhibitor activity"/>
    <property type="evidence" value="ECO:0007669"/>
    <property type="project" value="InterPro"/>
</dbReference>
<dbReference type="GO" id="GO:0030599">
    <property type="term" value="F:pectinesterase activity"/>
    <property type="evidence" value="ECO:0007669"/>
    <property type="project" value="UniProtKB-EC"/>
</dbReference>
<dbReference type="GO" id="GO:0042545">
    <property type="term" value="P:cell wall modification"/>
    <property type="evidence" value="ECO:0007669"/>
    <property type="project" value="InterPro"/>
</dbReference>
<dbReference type="GO" id="GO:0045490">
    <property type="term" value="P:pectin catabolic process"/>
    <property type="evidence" value="ECO:0007669"/>
    <property type="project" value="UniProtKB-UniPathway"/>
</dbReference>
<dbReference type="CDD" id="cd15798">
    <property type="entry name" value="PMEI-like_3"/>
    <property type="match status" value="1"/>
</dbReference>
<dbReference type="FunFam" id="1.20.140.40:FF:000016">
    <property type="entry name" value="Pectinesterase"/>
    <property type="match status" value="1"/>
</dbReference>
<dbReference type="FunFam" id="2.160.20.10:FF:000029">
    <property type="entry name" value="Pectinesterase 4"/>
    <property type="match status" value="1"/>
</dbReference>
<dbReference type="Gene3D" id="1.20.140.40">
    <property type="entry name" value="Invertase/pectin methylesterase inhibitor family protein"/>
    <property type="match status" value="1"/>
</dbReference>
<dbReference type="Gene3D" id="2.160.20.10">
    <property type="entry name" value="Single-stranded right-handed beta-helix, Pectin lyase-like"/>
    <property type="match status" value="1"/>
</dbReference>
<dbReference type="InterPro" id="IPR035513">
    <property type="entry name" value="Invertase/methylesterase_inhib"/>
</dbReference>
<dbReference type="InterPro" id="IPR012334">
    <property type="entry name" value="Pectin_lyas_fold"/>
</dbReference>
<dbReference type="InterPro" id="IPR011050">
    <property type="entry name" value="Pectin_lyase_fold/virulence"/>
</dbReference>
<dbReference type="InterPro" id="IPR033131">
    <property type="entry name" value="Pectinesterase_Asp_AS"/>
</dbReference>
<dbReference type="InterPro" id="IPR000070">
    <property type="entry name" value="Pectinesterase_cat"/>
</dbReference>
<dbReference type="InterPro" id="IPR006501">
    <property type="entry name" value="Pectinesterase_inhib_dom"/>
</dbReference>
<dbReference type="InterPro" id="IPR018040">
    <property type="entry name" value="Pectinesterase_Tyr_AS"/>
</dbReference>
<dbReference type="NCBIfam" id="TIGR01614">
    <property type="entry name" value="PME_inhib"/>
    <property type="match status" value="1"/>
</dbReference>
<dbReference type="PANTHER" id="PTHR31707">
    <property type="entry name" value="PECTINESTERASE"/>
    <property type="match status" value="1"/>
</dbReference>
<dbReference type="Pfam" id="PF01095">
    <property type="entry name" value="Pectinesterase"/>
    <property type="match status" value="1"/>
</dbReference>
<dbReference type="Pfam" id="PF04043">
    <property type="entry name" value="PMEI"/>
    <property type="match status" value="1"/>
</dbReference>
<dbReference type="SMART" id="SM00856">
    <property type="entry name" value="PMEI"/>
    <property type="match status" value="1"/>
</dbReference>
<dbReference type="SUPFAM" id="SSF51126">
    <property type="entry name" value="Pectin lyase-like"/>
    <property type="match status" value="1"/>
</dbReference>
<dbReference type="SUPFAM" id="SSF101148">
    <property type="entry name" value="Plant invertase/pectin methylesterase inhibitor"/>
    <property type="match status" value="1"/>
</dbReference>
<dbReference type="PROSITE" id="PS00800">
    <property type="entry name" value="PECTINESTERASE_1"/>
    <property type="match status" value="1"/>
</dbReference>
<dbReference type="PROSITE" id="PS00503">
    <property type="entry name" value="PECTINESTERASE_2"/>
    <property type="match status" value="1"/>
</dbReference>
<gene>
    <name type="primary">BP19</name>
</gene>
<keyword id="KW-0063">Aspartyl esterase</keyword>
<keyword id="KW-0134">Cell wall</keyword>
<keyword id="KW-0961">Cell wall biogenesis/degradation</keyword>
<keyword id="KW-0325">Glycoprotein</keyword>
<keyword id="KW-0378">Hydrolase</keyword>
<keyword id="KW-0964">Secreted</keyword>
<keyword id="KW-0732">Signal</keyword>
<reference key="1">
    <citation type="journal article" date="1991" name="Plant Mol. Biol.">
        <title>A gene showing sequence similarity to pectin esterase is specifically expressed in developing pollen of Brassica napus. Sequences in its 5' flanking region are conserved in other pollen-specific promoters.</title>
        <authorList>
            <person name="Albani D."/>
            <person name="Altosaar I."/>
            <person name="Arnison P.G."/>
            <person name="Fabijanski S.F."/>
        </authorList>
    </citation>
    <scope>NUCLEOTIDE SEQUENCE [GENOMIC DNA]</scope>
    <source>
        <strain>cv. Westar</strain>
        <tissue>Pollen</tissue>
    </source>
</reference>
<evidence type="ECO:0000250" key="1"/>
<evidence type="ECO:0000255" key="2"/>
<evidence type="ECO:0000255" key="3">
    <source>
        <dbReference type="PROSITE-ProRule" id="PRU10040"/>
    </source>
</evidence>
<evidence type="ECO:0000256" key="4">
    <source>
        <dbReference type="SAM" id="MobiDB-lite"/>
    </source>
</evidence>
<evidence type="ECO:0000305" key="5"/>
<comment type="function">
    <text evidence="1">Acts in the modification of cell walls via demethylesterification of cell wall pectin.</text>
</comment>
<comment type="catalytic activity">
    <reaction>
        <text>[(1-&gt;4)-alpha-D-galacturonosyl methyl ester](n) + n H2O = [(1-&gt;4)-alpha-D-galacturonosyl](n) + n methanol + n H(+)</text>
        <dbReference type="Rhea" id="RHEA:22380"/>
        <dbReference type="Rhea" id="RHEA-COMP:14570"/>
        <dbReference type="Rhea" id="RHEA-COMP:14573"/>
        <dbReference type="ChEBI" id="CHEBI:15377"/>
        <dbReference type="ChEBI" id="CHEBI:15378"/>
        <dbReference type="ChEBI" id="CHEBI:17790"/>
        <dbReference type="ChEBI" id="CHEBI:140522"/>
        <dbReference type="ChEBI" id="CHEBI:140523"/>
        <dbReference type="EC" id="3.1.1.11"/>
    </reaction>
</comment>
<comment type="pathway">
    <text>Glycan metabolism; pectin degradation; 2-dehydro-3-deoxy-D-gluconate from pectin: step 1/5.</text>
</comment>
<comment type="subcellular location">
    <subcellularLocation>
        <location evidence="5">Secreted</location>
        <location evidence="5">Cell wall</location>
    </subcellularLocation>
</comment>
<comment type="tissue specificity">
    <text>Pollen, and at much lower levels in pistils and petals.</text>
</comment>
<comment type="developmental stage">
    <text>Highly expressed during microspore development.</text>
</comment>
<comment type="miscellaneous">
    <text>The PMEI region may act as an autoinhibitory domain and prevent untimely PME activity during transport.</text>
</comment>
<comment type="similarity">
    <text evidence="5">In the N-terminal section; belongs to the PMEI family.</text>
</comment>
<comment type="similarity">
    <text evidence="5">In the C-terminal section; belongs to the pectinesterase family.</text>
</comment>
<feature type="signal peptide" evidence="2">
    <location>
        <begin position="1"/>
        <end position="22"/>
    </location>
</feature>
<feature type="chain" id="PRO_0000023479" description="Probable pectinesterase/pectinesterase inhibitor">
    <location>
        <begin position="23"/>
        <end position="584"/>
    </location>
</feature>
<feature type="region of interest" description="Pectinesterase inhibitor">
    <location>
        <begin position="40"/>
        <end position="191"/>
    </location>
</feature>
<feature type="region of interest" description="Disordered" evidence="4">
    <location>
        <begin position="246"/>
        <end position="267"/>
    </location>
</feature>
<feature type="region of interest" description="Pectinesterase">
    <location>
        <begin position="272"/>
        <end position="571"/>
    </location>
</feature>
<feature type="active site" description="Proton donor; for pectinesterase activity" evidence="3">
    <location>
        <position position="402"/>
    </location>
</feature>
<feature type="active site" description="Nucleophile; for pectinesterase activity" evidence="3">
    <location>
        <position position="423"/>
    </location>
</feature>
<feature type="binding site" evidence="1">
    <location>
        <position position="349"/>
    </location>
    <ligand>
        <name>substrate</name>
        <note>for pectinesterase activity</note>
    </ligand>
</feature>
<feature type="binding site" evidence="1">
    <location>
        <position position="379"/>
    </location>
    <ligand>
        <name>substrate</name>
        <note>for pectinesterase activity</note>
    </ligand>
</feature>
<feature type="binding site" evidence="1">
    <location>
        <position position="492"/>
    </location>
    <ligand>
        <name>substrate</name>
        <note>for pectinesterase activity</note>
    </ligand>
</feature>
<feature type="binding site" evidence="1">
    <location>
        <position position="494"/>
    </location>
    <ligand>
        <name>substrate</name>
        <note>for pectinesterase activity</note>
    </ligand>
</feature>
<feature type="site" description="Transition state stabilizer" evidence="1">
    <location>
        <position position="401"/>
    </location>
</feature>
<feature type="glycosylation site" description="N-linked (GlcNAc...) asparagine" evidence="2">
    <location>
        <position position="91"/>
    </location>
</feature>
<feature type="glycosylation site" description="N-linked (GlcNAc...) asparagine" evidence="2">
    <location>
        <position position="105"/>
    </location>
</feature>
<protein>
    <recommendedName>
        <fullName>Probable pectinesterase/pectinesterase inhibitor</fullName>
    </recommendedName>
    <domain>
        <recommendedName>
            <fullName>Pectinesterase inhibitor</fullName>
        </recommendedName>
        <alternativeName>
            <fullName>Pectin methylesterase inhibitor</fullName>
        </alternativeName>
    </domain>
    <domain>
        <recommendedName>
            <fullName>Pectinesterase</fullName>
            <shortName>PE</shortName>
            <ecNumber>3.1.1.11</ecNumber>
        </recommendedName>
        <alternativeName>
            <fullName>Pectin methylesterase</fullName>
        </alternativeName>
    </domain>
</protein>